<feature type="chain" id="PRO_0000048178" description="Tubulin alpha chain">
    <location>
        <begin position="1"/>
        <end position="450"/>
    </location>
</feature>
<feature type="active site" evidence="2">
    <location>
        <position position="254"/>
    </location>
</feature>
<feature type="binding site" evidence="2">
    <location>
        <position position="11"/>
    </location>
    <ligand>
        <name>GTP</name>
        <dbReference type="ChEBI" id="CHEBI:37565"/>
    </ligand>
</feature>
<feature type="binding site" evidence="2">
    <location>
        <position position="71"/>
    </location>
    <ligand>
        <name>GTP</name>
        <dbReference type="ChEBI" id="CHEBI:37565"/>
    </ligand>
</feature>
<feature type="binding site" evidence="2">
    <location>
        <position position="71"/>
    </location>
    <ligand>
        <name>Mg(2+)</name>
        <dbReference type="ChEBI" id="CHEBI:18420"/>
    </ligand>
</feature>
<feature type="binding site" evidence="2">
    <location>
        <position position="140"/>
    </location>
    <ligand>
        <name>GTP</name>
        <dbReference type="ChEBI" id="CHEBI:37565"/>
    </ligand>
</feature>
<feature type="binding site" evidence="2">
    <location>
        <position position="144"/>
    </location>
    <ligand>
        <name>GTP</name>
        <dbReference type="ChEBI" id="CHEBI:37565"/>
    </ligand>
</feature>
<feature type="binding site" evidence="2">
    <location>
        <position position="145"/>
    </location>
    <ligand>
        <name>GTP</name>
        <dbReference type="ChEBI" id="CHEBI:37565"/>
    </ligand>
</feature>
<feature type="binding site" evidence="2">
    <location>
        <position position="179"/>
    </location>
    <ligand>
        <name>GTP</name>
        <dbReference type="ChEBI" id="CHEBI:37565"/>
    </ligand>
</feature>
<feature type="binding site" evidence="2">
    <location>
        <position position="206"/>
    </location>
    <ligand>
        <name>GTP</name>
        <dbReference type="ChEBI" id="CHEBI:37565"/>
    </ligand>
</feature>
<feature type="binding site" evidence="2">
    <location>
        <position position="228"/>
    </location>
    <ligand>
        <name>GTP</name>
        <dbReference type="ChEBI" id="CHEBI:37565"/>
    </ligand>
</feature>
<feature type="site" description="Involved in polymerization" evidence="1">
    <location>
        <position position="450"/>
    </location>
</feature>
<feature type="modified residue" description="N6-acetyllysine" evidence="1">
    <location>
        <position position="40"/>
    </location>
</feature>
<evidence type="ECO:0000250" key="1"/>
<evidence type="ECO:0000250" key="2">
    <source>
        <dbReference type="UniProtKB" id="P68363"/>
    </source>
</evidence>
<evidence type="ECO:0000305" key="3"/>
<proteinExistence type="evidence at transcript level"/>
<protein>
    <recommendedName>
        <fullName>Tubulin alpha chain</fullName>
        <ecNumber evidence="2">3.6.5.-</ecNumber>
    </recommendedName>
</protein>
<dbReference type="EC" id="3.6.5.-" evidence="2"/>
<dbReference type="EMBL" id="L02108">
    <property type="protein sequence ID" value="AAA29167.1"/>
    <property type="molecule type" value="mRNA"/>
</dbReference>
<dbReference type="PIR" id="A48466">
    <property type="entry name" value="A48466"/>
</dbReference>
<dbReference type="SMR" id="P50719"/>
<dbReference type="DrugCentral" id="P50719"/>
<dbReference type="WBParaSite" id="HCON_00067020-00002">
    <property type="protein sequence ID" value="HCON_00067020-00002"/>
    <property type="gene ID" value="HCON_00067020"/>
</dbReference>
<dbReference type="OrthoDB" id="1844at2759"/>
<dbReference type="Proteomes" id="UP000025227">
    <property type="component" value="Unplaced"/>
</dbReference>
<dbReference type="GO" id="GO:0005737">
    <property type="term" value="C:cytoplasm"/>
    <property type="evidence" value="ECO:0007669"/>
    <property type="project" value="UniProtKB-KW"/>
</dbReference>
<dbReference type="GO" id="GO:0005874">
    <property type="term" value="C:microtubule"/>
    <property type="evidence" value="ECO:0007669"/>
    <property type="project" value="UniProtKB-KW"/>
</dbReference>
<dbReference type="GO" id="GO:0005525">
    <property type="term" value="F:GTP binding"/>
    <property type="evidence" value="ECO:0007669"/>
    <property type="project" value="UniProtKB-KW"/>
</dbReference>
<dbReference type="GO" id="GO:0016787">
    <property type="term" value="F:hydrolase activity"/>
    <property type="evidence" value="ECO:0007669"/>
    <property type="project" value="UniProtKB-KW"/>
</dbReference>
<dbReference type="GO" id="GO:0046872">
    <property type="term" value="F:metal ion binding"/>
    <property type="evidence" value="ECO:0007669"/>
    <property type="project" value="UniProtKB-KW"/>
</dbReference>
<dbReference type="GO" id="GO:0005200">
    <property type="term" value="F:structural constituent of cytoskeleton"/>
    <property type="evidence" value="ECO:0007669"/>
    <property type="project" value="InterPro"/>
</dbReference>
<dbReference type="GO" id="GO:0007017">
    <property type="term" value="P:microtubule-based process"/>
    <property type="evidence" value="ECO:0007669"/>
    <property type="project" value="InterPro"/>
</dbReference>
<dbReference type="CDD" id="cd02186">
    <property type="entry name" value="alpha_tubulin"/>
    <property type="match status" value="1"/>
</dbReference>
<dbReference type="FunFam" id="1.10.287.600:FF:000005">
    <property type="entry name" value="Tubulin alpha chain"/>
    <property type="match status" value="1"/>
</dbReference>
<dbReference type="FunFam" id="3.30.1330.20:FF:000001">
    <property type="entry name" value="Tubulin alpha chain"/>
    <property type="match status" value="1"/>
</dbReference>
<dbReference type="FunFam" id="3.40.50.1440:FF:000019">
    <property type="entry name" value="Tubulin alpha chain"/>
    <property type="match status" value="1"/>
</dbReference>
<dbReference type="Gene3D" id="1.10.287.600">
    <property type="entry name" value="Helix hairpin bin"/>
    <property type="match status" value="1"/>
</dbReference>
<dbReference type="Gene3D" id="3.30.1330.20">
    <property type="entry name" value="Tubulin/FtsZ, C-terminal domain"/>
    <property type="match status" value="1"/>
</dbReference>
<dbReference type="Gene3D" id="3.40.50.1440">
    <property type="entry name" value="Tubulin/FtsZ, GTPase domain"/>
    <property type="match status" value="1"/>
</dbReference>
<dbReference type="InterPro" id="IPR002452">
    <property type="entry name" value="Alpha_tubulin"/>
</dbReference>
<dbReference type="InterPro" id="IPR008280">
    <property type="entry name" value="Tub_FtsZ_C"/>
</dbReference>
<dbReference type="InterPro" id="IPR000217">
    <property type="entry name" value="Tubulin"/>
</dbReference>
<dbReference type="InterPro" id="IPR037103">
    <property type="entry name" value="Tubulin/FtsZ-like_C"/>
</dbReference>
<dbReference type="InterPro" id="IPR018316">
    <property type="entry name" value="Tubulin/FtsZ_2-layer-sand-dom"/>
</dbReference>
<dbReference type="InterPro" id="IPR036525">
    <property type="entry name" value="Tubulin/FtsZ_GTPase_sf"/>
</dbReference>
<dbReference type="InterPro" id="IPR023123">
    <property type="entry name" value="Tubulin_C"/>
</dbReference>
<dbReference type="InterPro" id="IPR017975">
    <property type="entry name" value="Tubulin_CS"/>
</dbReference>
<dbReference type="InterPro" id="IPR003008">
    <property type="entry name" value="Tubulin_FtsZ_GTPase"/>
</dbReference>
<dbReference type="PANTHER" id="PTHR11588">
    <property type="entry name" value="TUBULIN"/>
    <property type="match status" value="1"/>
</dbReference>
<dbReference type="Pfam" id="PF00091">
    <property type="entry name" value="Tubulin"/>
    <property type="match status" value="1"/>
</dbReference>
<dbReference type="Pfam" id="PF03953">
    <property type="entry name" value="Tubulin_C"/>
    <property type="match status" value="1"/>
</dbReference>
<dbReference type="PRINTS" id="PR01162">
    <property type="entry name" value="ALPHATUBULIN"/>
</dbReference>
<dbReference type="PRINTS" id="PR01161">
    <property type="entry name" value="TUBULIN"/>
</dbReference>
<dbReference type="SMART" id="SM00864">
    <property type="entry name" value="Tubulin"/>
    <property type="match status" value="1"/>
</dbReference>
<dbReference type="SMART" id="SM00865">
    <property type="entry name" value="Tubulin_C"/>
    <property type="match status" value="1"/>
</dbReference>
<dbReference type="SUPFAM" id="SSF55307">
    <property type="entry name" value="Tubulin C-terminal domain-like"/>
    <property type="match status" value="1"/>
</dbReference>
<dbReference type="SUPFAM" id="SSF52490">
    <property type="entry name" value="Tubulin nucleotide-binding domain-like"/>
    <property type="match status" value="1"/>
</dbReference>
<dbReference type="PROSITE" id="PS00227">
    <property type="entry name" value="TUBULIN"/>
    <property type="match status" value="1"/>
</dbReference>
<organism>
    <name type="scientific">Haemonchus contortus</name>
    <name type="common">Barber pole worm</name>
    <dbReference type="NCBI Taxonomy" id="6289"/>
    <lineage>
        <taxon>Eukaryota</taxon>
        <taxon>Metazoa</taxon>
        <taxon>Ecdysozoa</taxon>
        <taxon>Nematoda</taxon>
        <taxon>Chromadorea</taxon>
        <taxon>Rhabditida</taxon>
        <taxon>Rhabditina</taxon>
        <taxon>Rhabditomorpha</taxon>
        <taxon>Strongyloidea</taxon>
        <taxon>Trichostrongylidae</taxon>
        <taxon>Haemonchus</taxon>
    </lineage>
</organism>
<comment type="function">
    <text>Tubulin is the major constituent of microtubules, a cylinder consisting of laterally associated linear protofilaments composed of alpha- and beta-tubulin heterodimers. Microtubules grow by the addition of GTP-tubulin dimers to the microtubule end, where a stabilizing cap forms. Below the cap, tubulin dimers are in GDP-bound state, owing to GTPase activity of alpha-tubulin.</text>
</comment>
<comment type="catalytic activity">
    <reaction evidence="2">
        <text>GTP + H2O = GDP + phosphate + H(+)</text>
        <dbReference type="Rhea" id="RHEA:19669"/>
        <dbReference type="ChEBI" id="CHEBI:15377"/>
        <dbReference type="ChEBI" id="CHEBI:15378"/>
        <dbReference type="ChEBI" id="CHEBI:37565"/>
        <dbReference type="ChEBI" id="CHEBI:43474"/>
        <dbReference type="ChEBI" id="CHEBI:58189"/>
    </reaction>
    <physiologicalReaction direction="left-to-right" evidence="2">
        <dbReference type="Rhea" id="RHEA:19670"/>
    </physiologicalReaction>
</comment>
<comment type="cofactor">
    <cofactor evidence="2">
        <name>Mg(2+)</name>
        <dbReference type="ChEBI" id="CHEBI:18420"/>
    </cofactor>
</comment>
<comment type="subunit">
    <text>Dimer of alpha and beta chains. A typical microtubule is a hollow water-filled tube with an outer diameter of 25 nm and an inner diameter of 15 nM. Alpha-beta heterodimers associate head-to-tail to form protofilaments running lengthwise along the microtubule wall with the beta-tubulin subunit facing the microtubule plus end conferring a structural polarity. Microtubules usually have 13 protofilaments but different protofilament numbers can be found in some organisms and specialized cells.</text>
</comment>
<comment type="subcellular location">
    <subcellularLocation>
        <location>Cytoplasm</location>
        <location>Cytoskeleton</location>
    </subcellularLocation>
</comment>
<comment type="PTM">
    <text evidence="1">Undergoes a tyrosination/detyrosination cycle, the cyclic removal and re-addition of a C-terminal tyrosine residue by the enzymes tubulin tyrosine carboxypeptidase (TTCP) and tubulin tyrosine ligase (TTL), respectively.</text>
</comment>
<comment type="PTM">
    <text evidence="1">Acetylation of alpha chains at Lys-40 stabilizes microtubules and affects affinity and processivity of microtubule motors. This modification has a role in multiple cellular functions, ranging from cell motility, cell cycle progression or cell differentiation to intracellular trafficking and signaling (By similarity).</text>
</comment>
<comment type="similarity">
    <text evidence="3">Belongs to the tubulin family.</text>
</comment>
<accession>P50719</accession>
<keyword id="KW-0007">Acetylation</keyword>
<keyword id="KW-0963">Cytoplasm</keyword>
<keyword id="KW-0206">Cytoskeleton</keyword>
<keyword id="KW-0342">GTP-binding</keyword>
<keyword id="KW-0378">Hydrolase</keyword>
<keyword id="KW-0460">Magnesium</keyword>
<keyword id="KW-0479">Metal-binding</keyword>
<keyword id="KW-0493">Microtubule</keyword>
<keyword id="KW-0547">Nucleotide-binding</keyword>
<sequence>MREVISIHIGQAGVQIGNACWELYCLEHGIQPDGQMPSDKSLGGCDDSFSTFFSETGSGRHVPRAVMIDLEPTVIDEIRTGTYRSLFHPEQLITGKEDAANNYARGHYTIGKEIIDLTLDRIRRLADNCTGLQGFLVFHSFGGGTGSGFTSLLMERLSVDYGKKAKLEFSVYPAPQVSTAVVEPYNSILTTHTTLEHSDCSFMVDNEAIYDICRRNLDIERPSYTNLNRLIGQIVSSITASLRFDGALNVDLTEFQTNLVPYPRIHFPLATFSPVISAEKAYHEQLSVAEITNMCFEPHNQMVKCDPRHGKYMAVCLLFRGDVVPKDVNAAIATIKTKRSIQFVDWCPTGFKVGINYQPPTVVPGGDLAKVPRAVCMLSNTTAIAEAWARLDHKFDLMYAKRAFVHWYVGEGMEEGEFSEAREDLAALEKDYEEVGVDSLEDNGEEGDEY</sequence>
<reference key="1">
    <citation type="journal article" date="1992" name="Mol. Biochem. Parasitol.">
        <title>Cloning of a cDNA encoding alpha-tubulin from Haemonchus contortus.</title>
        <authorList>
            <person name="Klein R.D."/>
            <person name="Nulf S.C."/>
            <person name="Alexander-Bowman S.J."/>
            <person name="Mainone C.B."/>
            <person name="Geary T.G."/>
        </authorList>
    </citation>
    <scope>NUCLEOTIDE SEQUENCE [MRNA]</scope>
</reference>
<name>TBA_HAECO</name>